<name>SDH6_ARATH</name>
<protein>
    <recommendedName>
        <fullName evidence="2">Succinate dehydrogenase subunit 6, mitochondrial</fullName>
    </recommendedName>
</protein>
<accession>Q941A6</accession>
<proteinExistence type="evidence at protein level"/>
<comment type="pathway">
    <text evidence="2">Carbohydrate metabolism; tricarboxylic acid cycle.</text>
</comment>
<comment type="subunit">
    <text evidence="1">Component of complex II composed of eight subunits in plants: four classical SDH subunits SDH1, SDH2, SDH3 and SDH4 (a flavoprotein (FP), an iron-sulfur protein (IP), and a cytochrome b composed of a large and a small subunit.), as well as four subunits unknown in mitochondria from bacteria and heterotrophic eukaryotes.</text>
</comment>
<comment type="subcellular location">
    <subcellularLocation>
        <location evidence="2">Mitochondrion inner membrane</location>
        <topology evidence="2">Peripheral membrane protein</topology>
    </subcellularLocation>
</comment>
<sequence>MGDSESFVGKNWNGLKDFWSDRLSFFENYTRFTKRDAPLPSWSSSDVEEFIASDPVHGPTLKTAREAVTFGVTGAALGAVSTAAFAWKYSRSPHGAALSFLGGGVFGWTFGQEVANHTLQLYKLDTMAAQVKFMEWWERKSQ</sequence>
<feature type="initiator methionine" description="Removed" evidence="4">
    <location>
        <position position="1"/>
    </location>
</feature>
<feature type="chain" id="PRO_0000431752" description="Succinate dehydrogenase subunit 6, mitochondrial">
    <location>
        <begin position="2"/>
        <end position="142"/>
    </location>
</feature>
<feature type="modified residue" description="N-acetylglycine" evidence="4">
    <location>
        <position position="2"/>
    </location>
</feature>
<organism>
    <name type="scientific">Arabidopsis thaliana</name>
    <name type="common">Mouse-ear cress</name>
    <dbReference type="NCBI Taxonomy" id="3702"/>
    <lineage>
        <taxon>Eukaryota</taxon>
        <taxon>Viridiplantae</taxon>
        <taxon>Streptophyta</taxon>
        <taxon>Embryophyta</taxon>
        <taxon>Tracheophyta</taxon>
        <taxon>Spermatophyta</taxon>
        <taxon>Magnoliopsida</taxon>
        <taxon>eudicotyledons</taxon>
        <taxon>Gunneridae</taxon>
        <taxon>Pentapetalae</taxon>
        <taxon>rosids</taxon>
        <taxon>malvids</taxon>
        <taxon>Brassicales</taxon>
        <taxon>Brassicaceae</taxon>
        <taxon>Camelineae</taxon>
        <taxon>Arabidopsis</taxon>
    </lineage>
</organism>
<dbReference type="EMBL" id="AC006932">
    <property type="status" value="NOT_ANNOTATED_CDS"/>
    <property type="molecule type" value="Genomic_DNA"/>
</dbReference>
<dbReference type="EMBL" id="CP002684">
    <property type="protein sequence ID" value="AEE28297.1"/>
    <property type="molecule type" value="Genomic_DNA"/>
</dbReference>
<dbReference type="EMBL" id="AY052314">
    <property type="protein sequence ID" value="AAK96507.1"/>
    <property type="molecule type" value="mRNA"/>
</dbReference>
<dbReference type="EMBL" id="AY061894">
    <property type="protein sequence ID" value="AAL31221.1"/>
    <property type="molecule type" value="mRNA"/>
</dbReference>
<dbReference type="RefSeq" id="NP_563819.1">
    <property type="nucleotide sequence ID" value="NM_100721.5"/>
</dbReference>
<dbReference type="FunCoup" id="Q941A6">
    <property type="interactions" value="2098"/>
</dbReference>
<dbReference type="IntAct" id="Q941A6">
    <property type="interactions" value="3"/>
</dbReference>
<dbReference type="STRING" id="3702.Q941A6"/>
<dbReference type="iPTMnet" id="Q941A6"/>
<dbReference type="PaxDb" id="3702-AT1G08480.1"/>
<dbReference type="ProteomicsDB" id="232858"/>
<dbReference type="EnsemblPlants" id="AT1G08480.1">
    <property type="protein sequence ID" value="AT1G08480.1"/>
    <property type="gene ID" value="AT1G08480"/>
</dbReference>
<dbReference type="GeneID" id="837369"/>
<dbReference type="Gramene" id="AT1G08480.1">
    <property type="protein sequence ID" value="AT1G08480.1"/>
    <property type="gene ID" value="AT1G08480"/>
</dbReference>
<dbReference type="KEGG" id="ath:AT1G08480"/>
<dbReference type="Araport" id="AT1G08480"/>
<dbReference type="TAIR" id="AT1G08480">
    <property type="gene designation" value="SDH6"/>
</dbReference>
<dbReference type="eggNOG" id="ENOG502RZ7U">
    <property type="taxonomic scope" value="Eukaryota"/>
</dbReference>
<dbReference type="HOGENOM" id="CLU_116953_0_0_1"/>
<dbReference type="InParanoid" id="Q941A6"/>
<dbReference type="OMA" id="FMEWWEK"/>
<dbReference type="PhylomeDB" id="Q941A6"/>
<dbReference type="BioCyc" id="ARA:AT1G08480-MONOMER"/>
<dbReference type="BioCyc" id="MetaCyc:AT1G08480-MONOMER"/>
<dbReference type="UniPathway" id="UPA00223"/>
<dbReference type="PRO" id="PR:Q941A6"/>
<dbReference type="Proteomes" id="UP000006548">
    <property type="component" value="Chromosome 1"/>
</dbReference>
<dbReference type="ExpressionAtlas" id="Q941A6">
    <property type="expression patterns" value="baseline and differential"/>
</dbReference>
<dbReference type="GO" id="GO:0005576">
    <property type="term" value="C:extracellular region"/>
    <property type="evidence" value="ECO:0007005"/>
    <property type="project" value="TAIR"/>
</dbReference>
<dbReference type="GO" id="GO:0005743">
    <property type="term" value="C:mitochondrial inner membrane"/>
    <property type="evidence" value="ECO:0007669"/>
    <property type="project" value="UniProtKB-SubCell"/>
</dbReference>
<dbReference type="GO" id="GO:0005739">
    <property type="term" value="C:mitochondrion"/>
    <property type="evidence" value="ECO:0007005"/>
    <property type="project" value="TAIR"/>
</dbReference>
<dbReference type="GO" id="GO:0000325">
    <property type="term" value="C:plant-type vacuole"/>
    <property type="evidence" value="ECO:0007005"/>
    <property type="project" value="TAIR"/>
</dbReference>
<dbReference type="GO" id="GO:0045273">
    <property type="term" value="C:respiratory chain complex II (succinate dehydrogenase)"/>
    <property type="evidence" value="ECO:0000314"/>
    <property type="project" value="UniProtKB"/>
</dbReference>
<dbReference type="GO" id="GO:0043495">
    <property type="term" value="F:protein-membrane adaptor activity"/>
    <property type="evidence" value="ECO:0000314"/>
    <property type="project" value="TAIR"/>
</dbReference>
<dbReference type="GO" id="GO:0006099">
    <property type="term" value="P:tricarboxylic acid cycle"/>
    <property type="evidence" value="ECO:0007669"/>
    <property type="project" value="UniProtKB-UniPathway"/>
</dbReference>
<dbReference type="InterPro" id="IPR034574">
    <property type="entry name" value="SDH6"/>
</dbReference>
<dbReference type="PANTHER" id="PTHR36708">
    <property type="entry name" value="SUCCINATE DEHYDROGENASE SUBUNIT 6, MITOCHONDRIAL"/>
    <property type="match status" value="1"/>
</dbReference>
<dbReference type="PANTHER" id="PTHR36708:SF1">
    <property type="entry name" value="SUCCINATE DEHYDROGENASE SUBUNIT 6, MITOCHONDRIAL"/>
    <property type="match status" value="1"/>
</dbReference>
<evidence type="ECO:0000269" key="1">
    <source>
    </source>
</evidence>
<evidence type="ECO:0000305" key="2"/>
<evidence type="ECO:0000312" key="3">
    <source>
        <dbReference type="Araport" id="AT1G08480"/>
    </source>
</evidence>
<evidence type="ECO:0007744" key="4">
    <source>
    </source>
</evidence>
<keyword id="KW-0007">Acetylation</keyword>
<keyword id="KW-0472">Membrane</keyword>
<keyword id="KW-0496">Mitochondrion</keyword>
<keyword id="KW-0999">Mitochondrion inner membrane</keyword>
<keyword id="KW-1185">Reference proteome</keyword>
<keyword id="KW-0816">Tricarboxylic acid cycle</keyword>
<gene>
    <name evidence="2" type="primary">SDH6</name>
    <name evidence="3" type="ordered locus">At1g08480</name>
</gene>
<reference key="1">
    <citation type="journal article" date="2000" name="Nature">
        <title>Sequence and analysis of chromosome 1 of the plant Arabidopsis thaliana.</title>
        <authorList>
            <person name="Theologis A."/>
            <person name="Ecker J.R."/>
            <person name="Palm C.J."/>
            <person name="Federspiel N.A."/>
            <person name="Kaul S."/>
            <person name="White O."/>
            <person name="Alonso J."/>
            <person name="Altafi H."/>
            <person name="Araujo R."/>
            <person name="Bowman C.L."/>
            <person name="Brooks S.Y."/>
            <person name="Buehler E."/>
            <person name="Chan A."/>
            <person name="Chao Q."/>
            <person name="Chen H."/>
            <person name="Cheuk R.F."/>
            <person name="Chin C.W."/>
            <person name="Chung M.K."/>
            <person name="Conn L."/>
            <person name="Conway A.B."/>
            <person name="Conway A.R."/>
            <person name="Creasy T.H."/>
            <person name="Dewar K."/>
            <person name="Dunn P."/>
            <person name="Etgu P."/>
            <person name="Feldblyum T.V."/>
            <person name="Feng J.-D."/>
            <person name="Fong B."/>
            <person name="Fujii C.Y."/>
            <person name="Gill J.E."/>
            <person name="Goldsmith A.D."/>
            <person name="Haas B."/>
            <person name="Hansen N.F."/>
            <person name="Hughes B."/>
            <person name="Huizar L."/>
            <person name="Hunter J.L."/>
            <person name="Jenkins J."/>
            <person name="Johnson-Hopson C."/>
            <person name="Khan S."/>
            <person name="Khaykin E."/>
            <person name="Kim C.J."/>
            <person name="Koo H.L."/>
            <person name="Kremenetskaia I."/>
            <person name="Kurtz D.B."/>
            <person name="Kwan A."/>
            <person name="Lam B."/>
            <person name="Langin-Hooper S."/>
            <person name="Lee A."/>
            <person name="Lee J.M."/>
            <person name="Lenz C.A."/>
            <person name="Li J.H."/>
            <person name="Li Y.-P."/>
            <person name="Lin X."/>
            <person name="Liu S.X."/>
            <person name="Liu Z.A."/>
            <person name="Luros J.S."/>
            <person name="Maiti R."/>
            <person name="Marziali A."/>
            <person name="Militscher J."/>
            <person name="Miranda M."/>
            <person name="Nguyen M."/>
            <person name="Nierman W.C."/>
            <person name="Osborne B.I."/>
            <person name="Pai G."/>
            <person name="Peterson J."/>
            <person name="Pham P.K."/>
            <person name="Rizzo M."/>
            <person name="Rooney T."/>
            <person name="Rowley D."/>
            <person name="Sakano H."/>
            <person name="Salzberg S.L."/>
            <person name="Schwartz J.R."/>
            <person name="Shinn P."/>
            <person name="Southwick A.M."/>
            <person name="Sun H."/>
            <person name="Tallon L.J."/>
            <person name="Tambunga G."/>
            <person name="Toriumi M.J."/>
            <person name="Town C.D."/>
            <person name="Utterback T."/>
            <person name="Van Aken S."/>
            <person name="Vaysberg M."/>
            <person name="Vysotskaia V.S."/>
            <person name="Walker M."/>
            <person name="Wu D."/>
            <person name="Yu G."/>
            <person name="Fraser C.M."/>
            <person name="Venter J.C."/>
            <person name="Davis R.W."/>
        </authorList>
    </citation>
    <scope>NUCLEOTIDE SEQUENCE [LARGE SCALE GENOMIC DNA]</scope>
    <source>
        <strain>cv. Columbia</strain>
    </source>
</reference>
<reference key="2">
    <citation type="journal article" date="2017" name="Plant J.">
        <title>Araport11: a complete reannotation of the Arabidopsis thaliana reference genome.</title>
        <authorList>
            <person name="Cheng C.Y."/>
            <person name="Krishnakumar V."/>
            <person name="Chan A.P."/>
            <person name="Thibaud-Nissen F."/>
            <person name="Schobel S."/>
            <person name="Town C.D."/>
        </authorList>
    </citation>
    <scope>GENOME REANNOTATION</scope>
    <source>
        <strain>cv. Columbia</strain>
    </source>
</reference>
<reference key="3">
    <citation type="journal article" date="2003" name="Science">
        <title>Empirical analysis of transcriptional activity in the Arabidopsis genome.</title>
        <authorList>
            <person name="Yamada K."/>
            <person name="Lim J."/>
            <person name="Dale J.M."/>
            <person name="Chen H."/>
            <person name="Shinn P."/>
            <person name="Palm C.J."/>
            <person name="Southwick A.M."/>
            <person name="Wu H.C."/>
            <person name="Kim C.J."/>
            <person name="Nguyen M."/>
            <person name="Pham P.K."/>
            <person name="Cheuk R.F."/>
            <person name="Karlin-Newmann G."/>
            <person name="Liu S.X."/>
            <person name="Lam B."/>
            <person name="Sakano H."/>
            <person name="Wu T."/>
            <person name="Yu G."/>
            <person name="Miranda M."/>
            <person name="Quach H.L."/>
            <person name="Tripp M."/>
            <person name="Chang C.H."/>
            <person name="Lee J.M."/>
            <person name="Toriumi M.J."/>
            <person name="Chan M.M."/>
            <person name="Tang C.C."/>
            <person name="Onodera C.S."/>
            <person name="Deng J.M."/>
            <person name="Akiyama K."/>
            <person name="Ansari Y."/>
            <person name="Arakawa T."/>
            <person name="Banh J."/>
            <person name="Banno F."/>
            <person name="Bowser L."/>
            <person name="Brooks S.Y."/>
            <person name="Carninci P."/>
            <person name="Chao Q."/>
            <person name="Choy N."/>
            <person name="Enju A."/>
            <person name="Goldsmith A.D."/>
            <person name="Gurjal M."/>
            <person name="Hansen N.F."/>
            <person name="Hayashizaki Y."/>
            <person name="Johnson-Hopson C."/>
            <person name="Hsuan V.W."/>
            <person name="Iida K."/>
            <person name="Karnes M."/>
            <person name="Khan S."/>
            <person name="Koesema E."/>
            <person name="Ishida J."/>
            <person name="Jiang P.X."/>
            <person name="Jones T."/>
            <person name="Kawai J."/>
            <person name="Kamiya A."/>
            <person name="Meyers C."/>
            <person name="Nakajima M."/>
            <person name="Narusaka M."/>
            <person name="Seki M."/>
            <person name="Sakurai T."/>
            <person name="Satou M."/>
            <person name="Tamse R."/>
            <person name="Vaysberg M."/>
            <person name="Wallender E.K."/>
            <person name="Wong C."/>
            <person name="Yamamura Y."/>
            <person name="Yuan S."/>
            <person name="Shinozaki K."/>
            <person name="Davis R.W."/>
            <person name="Theologis A."/>
            <person name="Ecker J.R."/>
        </authorList>
    </citation>
    <scope>NUCLEOTIDE SEQUENCE [LARGE SCALE MRNA]</scope>
    <source>
        <strain>cv. Columbia</strain>
    </source>
</reference>
<reference key="4">
    <citation type="journal article" date="2003" name="Plant Physiol.">
        <title>New insights into the respiratory chain of plant mitochondria. Supercomplexes and a unique composition of complex II.</title>
        <authorList>
            <person name="Eubel H."/>
            <person name="Jansch L."/>
            <person name="Braun H.P."/>
        </authorList>
    </citation>
    <scope>IDENTIFICATION BY MASS SPECTROMETRY</scope>
</reference>
<reference key="5">
    <citation type="journal article" date="2004" name="Plant Mol. Biol.">
        <title>Mitochondrial cytochrome c oxidase and succinate dehydrogenase complexes contain plant specific subunits.</title>
        <authorList>
            <person name="Millar A.H."/>
            <person name="Eubel H."/>
            <person name="Jansch L."/>
            <person name="Kruft V."/>
            <person name="Heazlewood J.L."/>
            <person name="Braun H.P."/>
        </authorList>
    </citation>
    <scope>IDENTIFICATION BY MASS SPECTROMETRY</scope>
    <scope>SUBUNIT</scope>
</reference>
<reference key="6">
    <citation type="journal article" date="2009" name="J. Proteomics">
        <title>Phosphoproteomic analysis of nuclei-enriched fractions from Arabidopsis thaliana.</title>
        <authorList>
            <person name="Jones A.M.E."/>
            <person name="MacLean D."/>
            <person name="Studholme D.J."/>
            <person name="Serna-Sanz A."/>
            <person name="Andreasson E."/>
            <person name="Rathjen J.P."/>
            <person name="Peck S.C."/>
        </authorList>
    </citation>
    <scope>IDENTIFICATION BY MASS SPECTROMETRY [LARGE SCALE ANALYSIS]</scope>
    <source>
        <strain>cv. Columbia</strain>
    </source>
</reference>
<reference key="7">
    <citation type="journal article" date="2012" name="Mol. Cell. Proteomics">
        <title>Comparative large-scale characterisation of plant vs. mammal proteins reveals similar and idiosyncratic N-alpha acetylation features.</title>
        <authorList>
            <person name="Bienvenut W.V."/>
            <person name="Sumpton D."/>
            <person name="Martinez A."/>
            <person name="Lilla S."/>
            <person name="Espagne C."/>
            <person name="Meinnel T."/>
            <person name="Giglione C."/>
        </authorList>
    </citation>
    <scope>ACETYLATION [LARGE SCALE ANALYSIS] AT GLY-2</scope>
    <scope>CLEAVAGE OF INITIATOR METHIONINE [LARGE SCALE ANALYSIS]</scope>
    <scope>IDENTIFICATION BY MASS SPECTROMETRY [LARGE SCALE ANALYSIS]</scope>
</reference>